<dbReference type="EMBL" id="AK342553">
    <property type="protein sequence ID" value="BAH72541.1"/>
    <property type="status" value="ALT_INIT"/>
    <property type="molecule type" value="mRNA"/>
</dbReference>
<dbReference type="SMR" id="C4WXC1"/>
<dbReference type="FunCoup" id="C4WXC1">
    <property type="interactions" value="2251"/>
</dbReference>
<dbReference type="STRING" id="7029.C4WXC1"/>
<dbReference type="KEGG" id="api:100162923"/>
<dbReference type="CTD" id="57019"/>
<dbReference type="eggNOG" id="KOG4020">
    <property type="taxonomic scope" value="Eukaryota"/>
</dbReference>
<dbReference type="InParanoid" id="C4WXC1"/>
<dbReference type="OrthoDB" id="311633at2759"/>
<dbReference type="Proteomes" id="UP000007819">
    <property type="component" value="Unassembled WGS sequence"/>
</dbReference>
<dbReference type="GO" id="GO:0005758">
    <property type="term" value="C:mitochondrial intermembrane space"/>
    <property type="evidence" value="ECO:0007669"/>
    <property type="project" value="UniProtKB-SubCell"/>
</dbReference>
<dbReference type="GO" id="GO:0051537">
    <property type="term" value="F:2 iron, 2 sulfur cluster binding"/>
    <property type="evidence" value="ECO:0007669"/>
    <property type="project" value="UniProtKB-UniRule"/>
</dbReference>
<dbReference type="GO" id="GO:0051539">
    <property type="term" value="F:4 iron, 4 sulfur cluster binding"/>
    <property type="evidence" value="ECO:0007669"/>
    <property type="project" value="UniProtKB-KW"/>
</dbReference>
<dbReference type="GO" id="GO:0009055">
    <property type="term" value="F:electron transfer activity"/>
    <property type="evidence" value="ECO:0007669"/>
    <property type="project" value="UniProtKB-UniRule"/>
</dbReference>
<dbReference type="GO" id="GO:0046872">
    <property type="term" value="F:metal ion binding"/>
    <property type="evidence" value="ECO:0007669"/>
    <property type="project" value="UniProtKB-KW"/>
</dbReference>
<dbReference type="GO" id="GO:0016226">
    <property type="term" value="P:iron-sulfur cluster assembly"/>
    <property type="evidence" value="ECO:0007669"/>
    <property type="project" value="UniProtKB-UniRule"/>
</dbReference>
<dbReference type="Gene3D" id="3.40.50.150">
    <property type="entry name" value="Vaccinia Virus protein VP39"/>
    <property type="match status" value="1"/>
</dbReference>
<dbReference type="HAMAP" id="MF_03115">
    <property type="entry name" value="Anamorsin"/>
    <property type="match status" value="1"/>
</dbReference>
<dbReference type="InterPro" id="IPR007785">
    <property type="entry name" value="Anamorsin"/>
</dbReference>
<dbReference type="InterPro" id="IPR046408">
    <property type="entry name" value="CIAPIN1"/>
</dbReference>
<dbReference type="InterPro" id="IPR029063">
    <property type="entry name" value="SAM-dependent_MTases_sf"/>
</dbReference>
<dbReference type="PANTHER" id="PTHR13273">
    <property type="entry name" value="ANAMORSIN"/>
    <property type="match status" value="1"/>
</dbReference>
<dbReference type="PANTHER" id="PTHR13273:SF14">
    <property type="entry name" value="ANAMORSIN"/>
    <property type="match status" value="1"/>
</dbReference>
<dbReference type="Pfam" id="PF05093">
    <property type="entry name" value="CIAPIN1"/>
    <property type="match status" value="1"/>
</dbReference>
<name>DRE2_ACYPI</name>
<sequence length="257" mass="27384">MSDRKNVLFVVGKSSAVKELEEFASCNADRANVKIEIVENIGLATDGPLYSAILSGFGADDNVSCDLNLLPTYTTLLTAGGTLIAKTDVGTEDALVKRMKLCGFLNVAKSESVPGVVVGNMPTYKVGSSDKVTLNPEMKENVVSAWKLDDNNSETISEDDLLEADDLIKPDSSSLRVCATTKKAKACKDCSCGLAEELEANRLKDTPKPDTSNAKSSCGSCYLGDAFRCASCPYLGMPAFRPGEKVQLAGNLLQDDF</sequence>
<proteinExistence type="evidence at transcript level"/>
<accession>C4WXC1</accession>
<evidence type="ECO:0000255" key="1">
    <source>
        <dbReference type="HAMAP-Rule" id="MF_03115"/>
    </source>
</evidence>
<evidence type="ECO:0000305" key="2"/>
<keyword id="KW-0001">2Fe-2S</keyword>
<keyword id="KW-0004">4Fe-4S</keyword>
<keyword id="KW-0963">Cytoplasm</keyword>
<keyword id="KW-0408">Iron</keyword>
<keyword id="KW-0411">Iron-sulfur</keyword>
<keyword id="KW-0479">Metal-binding</keyword>
<keyword id="KW-0496">Mitochondrion</keyword>
<keyword id="KW-1185">Reference proteome</keyword>
<reference key="1">
    <citation type="submission" date="2009-06" db="EMBL/GenBank/DDBJ databases">
        <title>A full-length cDNA resource of the pea aphid, Acyrthosiphon pisum.</title>
        <authorList>
            <person name="Shigenobu S."/>
            <person name="Nakabachi A."/>
            <person name="Richards S."/>
        </authorList>
    </citation>
    <scope>NUCLEOTIDE SEQUENCE [LARGE SCALE MRNA]</scope>
    <source>
        <strain>LSR1</strain>
    </source>
</reference>
<comment type="function">
    <text evidence="1">Component of the cytosolic iron-sulfur (Fe-S) protein assembly (CIA) machinery. Required for the maturation of extramitochondrial Fe-S proteins. Part of an electron transfer chain functioning in an early step of cytosolic Fe-S biogenesis, facilitating the de novo assembly of a [4Fe-4S] cluster on the cytosolic Fe-S scaffold complex. Electrons are transferred from NADPH via a FAD- and FMN-containing diflavin oxidoreductase. Together with the diflavin oxidoreductase, also required for the assembly of the diferric tyrosyl radical cofactor of ribonucleotide reductase (RNR), probably by providing electrons for reduction during radical cofactor maturation in the catalytic small subunit.</text>
</comment>
<comment type="cofactor">
    <cofactor evidence="1">
        <name>[2Fe-2S] cluster</name>
        <dbReference type="ChEBI" id="CHEBI:190135"/>
    </cofactor>
</comment>
<comment type="cofactor">
    <cofactor evidence="1">
        <name>[4Fe-4S] cluster</name>
        <dbReference type="ChEBI" id="CHEBI:49883"/>
    </cofactor>
</comment>
<comment type="subunit">
    <text evidence="1">Monomer.</text>
</comment>
<comment type="subcellular location">
    <subcellularLocation>
        <location evidence="1">Cytoplasm</location>
    </subcellularLocation>
    <subcellularLocation>
        <location evidence="1">Mitochondrion intermembrane space</location>
    </subcellularLocation>
</comment>
<comment type="domain">
    <text evidence="1">The C-terminal domain binds 2 Fe-S clusters but is otherwise mostly in an intrinsically disordered conformation.</text>
</comment>
<comment type="domain">
    <text evidence="1">The N-terminal domain has structural similarity with S-adenosyl-L-methionine-dependent methyltransferases, but does not bind S-adenosyl-L-methionine. It is required for correct assembly of the 2 Fe-S clusters.</text>
</comment>
<comment type="domain">
    <text evidence="1">The twin Cx2C motifs are involved in the recognition by the mitochondrial MIA40-ERV1 disulfide relay system. The formation of 2 disulfide bonds in the Cx2C motifs through dithiol/disulfide exchange reactions effectively traps the protein in the mitochondrial intermembrane space.</text>
</comment>
<comment type="similarity">
    <text evidence="1">Belongs to the anamorsin family.</text>
</comment>
<comment type="sequence caution" evidence="2">
    <conflict type="erroneous initiation">
        <sequence resource="EMBL-CDS" id="BAH72541"/>
    </conflict>
</comment>
<protein>
    <recommendedName>
        <fullName evidence="1">Anamorsin homolog</fullName>
    </recommendedName>
    <alternativeName>
        <fullName evidence="1">Fe-S cluster assembly protein DRE2 homolog</fullName>
    </alternativeName>
</protein>
<organism>
    <name type="scientific">Acyrthosiphon pisum</name>
    <name type="common">Pea aphid</name>
    <dbReference type="NCBI Taxonomy" id="7029"/>
    <lineage>
        <taxon>Eukaryota</taxon>
        <taxon>Metazoa</taxon>
        <taxon>Ecdysozoa</taxon>
        <taxon>Arthropoda</taxon>
        <taxon>Hexapoda</taxon>
        <taxon>Insecta</taxon>
        <taxon>Pterygota</taxon>
        <taxon>Neoptera</taxon>
        <taxon>Paraneoptera</taxon>
        <taxon>Hemiptera</taxon>
        <taxon>Sternorrhyncha</taxon>
        <taxon>Aphidomorpha</taxon>
        <taxon>Aphidoidea</taxon>
        <taxon>Aphididae</taxon>
        <taxon>Macrosiphini</taxon>
        <taxon>Acyrthosiphon</taxon>
    </lineage>
</organism>
<feature type="chain" id="PRO_0000392310" description="Anamorsin homolog">
    <location>
        <begin position="1"/>
        <end position="257"/>
    </location>
</feature>
<feature type="region of interest" description="N-terminal SAM-like domain" evidence="1">
    <location>
        <begin position="1"/>
        <end position="134"/>
    </location>
</feature>
<feature type="region of interest" description="Linker" evidence="1">
    <location>
        <begin position="135"/>
        <end position="168"/>
    </location>
</feature>
<feature type="region of interest" description="Fe-S binding site A" evidence="1">
    <location>
        <begin position="178"/>
        <end position="192"/>
    </location>
</feature>
<feature type="region of interest" description="Fe-S binding site B" evidence="1">
    <location>
        <begin position="218"/>
        <end position="232"/>
    </location>
</feature>
<feature type="short sequence motif" description="Cx2C motif 1" evidence="1">
    <location>
        <begin position="218"/>
        <end position="221"/>
    </location>
</feature>
<feature type="short sequence motif" description="Cx2C motif 2" evidence="1">
    <location>
        <begin position="229"/>
        <end position="232"/>
    </location>
</feature>
<feature type="binding site" evidence="1">
    <location>
        <position position="178"/>
    </location>
    <ligand>
        <name>[2Fe-2S] cluster</name>
        <dbReference type="ChEBI" id="CHEBI:190135"/>
    </ligand>
</feature>
<feature type="binding site" evidence="1">
    <location>
        <position position="187"/>
    </location>
    <ligand>
        <name>[2Fe-2S] cluster</name>
        <dbReference type="ChEBI" id="CHEBI:190135"/>
    </ligand>
</feature>
<feature type="binding site" evidence="1">
    <location>
        <position position="190"/>
    </location>
    <ligand>
        <name>[2Fe-2S] cluster</name>
        <dbReference type="ChEBI" id="CHEBI:190135"/>
    </ligand>
</feature>
<feature type="binding site" evidence="1">
    <location>
        <position position="192"/>
    </location>
    <ligand>
        <name>[2Fe-2S] cluster</name>
        <dbReference type="ChEBI" id="CHEBI:190135"/>
    </ligand>
</feature>
<feature type="binding site" evidence="1">
    <location>
        <position position="218"/>
    </location>
    <ligand>
        <name>[4Fe-4S] cluster</name>
        <dbReference type="ChEBI" id="CHEBI:49883"/>
    </ligand>
</feature>
<feature type="binding site" evidence="1">
    <location>
        <position position="221"/>
    </location>
    <ligand>
        <name>[4Fe-4S] cluster</name>
        <dbReference type="ChEBI" id="CHEBI:49883"/>
    </ligand>
</feature>
<feature type="binding site" evidence="1">
    <location>
        <position position="229"/>
    </location>
    <ligand>
        <name>[4Fe-4S] cluster</name>
        <dbReference type="ChEBI" id="CHEBI:49883"/>
    </ligand>
</feature>
<feature type="binding site" evidence="1">
    <location>
        <position position="232"/>
    </location>
    <ligand>
        <name>[4Fe-4S] cluster</name>
        <dbReference type="ChEBI" id="CHEBI:49883"/>
    </ligand>
</feature>
<gene>
    <name type="ORF">ACYPI004042</name>
</gene>